<keyword id="KW-0520">NAD</keyword>
<keyword id="KW-0560">Oxidoreductase</keyword>
<keyword id="KW-0816">Tricarboxylic acid cycle</keyword>
<dbReference type="EC" id="1.1.1.37"/>
<dbReference type="EMBL" id="AJ635391">
    <property type="protein sequence ID" value="CAG25802.1"/>
    <property type="molecule type" value="Genomic_DNA"/>
</dbReference>
<dbReference type="SMR" id="P0C1G5"/>
<dbReference type="GO" id="GO:0005737">
    <property type="term" value="C:cytoplasm"/>
    <property type="evidence" value="ECO:0007669"/>
    <property type="project" value="TreeGrafter"/>
</dbReference>
<dbReference type="GO" id="GO:0030060">
    <property type="term" value="F:L-malate dehydrogenase (NAD+) activity"/>
    <property type="evidence" value="ECO:0007669"/>
    <property type="project" value="UniProtKB-EC"/>
</dbReference>
<dbReference type="GO" id="GO:0006099">
    <property type="term" value="P:tricarboxylic acid cycle"/>
    <property type="evidence" value="ECO:0007669"/>
    <property type="project" value="UniProtKB-KW"/>
</dbReference>
<dbReference type="FunFam" id="3.40.50.720:FF:000268">
    <property type="entry name" value="Malate dehydrogenase"/>
    <property type="match status" value="1"/>
</dbReference>
<dbReference type="Gene3D" id="3.40.50.720">
    <property type="entry name" value="NAD(P)-binding Rossmann-like Domain"/>
    <property type="match status" value="1"/>
</dbReference>
<dbReference type="InterPro" id="IPR001236">
    <property type="entry name" value="Lactate/malate_DH_N"/>
</dbReference>
<dbReference type="InterPro" id="IPR036291">
    <property type="entry name" value="NAD(P)-bd_dom_sf"/>
</dbReference>
<dbReference type="PANTHER" id="PTHR11540">
    <property type="entry name" value="MALATE AND LACTATE DEHYDROGENASE"/>
    <property type="match status" value="1"/>
</dbReference>
<dbReference type="PANTHER" id="PTHR11540:SF16">
    <property type="entry name" value="MALATE DEHYDROGENASE, MITOCHONDRIAL"/>
    <property type="match status" value="1"/>
</dbReference>
<dbReference type="Pfam" id="PF00056">
    <property type="entry name" value="Ldh_1_N"/>
    <property type="match status" value="1"/>
</dbReference>
<dbReference type="SUPFAM" id="SSF51735">
    <property type="entry name" value="NAD(P)-binding Rossmann-fold domains"/>
    <property type="match status" value="1"/>
</dbReference>
<sequence length="114" mass="11913">SLYDIAPVTPGVAVDLSHIPTDVKIKGFSGEDATPALEGADVVLISAGVARKPGMDRSDLFNVNAGIVKNLVQQIAKTRPQACIGIITNPVNTTVAIAAEVLKKAGVYDKNKLF</sequence>
<name>MDH_KLEPR</name>
<comment type="function">
    <text evidence="1">Catalyzes the reversible oxidation of malate to oxaloacetate.</text>
</comment>
<comment type="catalytic activity">
    <reaction evidence="2">
        <text>(S)-malate + NAD(+) = oxaloacetate + NADH + H(+)</text>
        <dbReference type="Rhea" id="RHEA:21432"/>
        <dbReference type="ChEBI" id="CHEBI:15378"/>
        <dbReference type="ChEBI" id="CHEBI:15589"/>
        <dbReference type="ChEBI" id="CHEBI:16452"/>
        <dbReference type="ChEBI" id="CHEBI:57540"/>
        <dbReference type="ChEBI" id="CHEBI:57945"/>
        <dbReference type="EC" id="1.1.1.37"/>
    </reaction>
</comment>
<comment type="subunit">
    <text evidence="1">Homodimer.</text>
</comment>
<comment type="similarity">
    <text evidence="3">Belongs to the LDH/MDH superfamily. MDH type 1 family.</text>
</comment>
<feature type="chain" id="PRO_0000240201" description="Malate dehydrogenase">
    <location>
        <begin position="1" status="less than"/>
        <end position="114" status="greater than"/>
    </location>
</feature>
<feature type="binding site" evidence="1">
    <location>
        <position position="4"/>
    </location>
    <ligand>
        <name>NAD(+)</name>
        <dbReference type="ChEBI" id="CHEBI:57540"/>
    </ligand>
</feature>
<feature type="binding site" evidence="2">
    <location>
        <position position="51"/>
    </location>
    <ligand>
        <name>substrate</name>
    </ligand>
</feature>
<feature type="binding site" evidence="2">
    <location>
        <position position="57"/>
    </location>
    <ligand>
        <name>substrate</name>
    </ligand>
</feature>
<feature type="binding site" evidence="1">
    <location>
        <position position="64"/>
    </location>
    <ligand>
        <name>NAD(+)</name>
        <dbReference type="ChEBI" id="CHEBI:57540"/>
    </ligand>
</feature>
<feature type="binding site" evidence="1">
    <location>
        <begin position="87"/>
        <end position="89"/>
    </location>
    <ligand>
        <name>NAD(+)</name>
        <dbReference type="ChEBI" id="CHEBI:57540"/>
    </ligand>
</feature>
<feature type="binding site" evidence="2">
    <location>
        <position position="89"/>
    </location>
    <ligand>
        <name>substrate</name>
    </ligand>
</feature>
<feature type="non-terminal residue">
    <location>
        <position position="1"/>
    </location>
</feature>
<feature type="non-terminal residue">
    <location>
        <position position="114"/>
    </location>
</feature>
<evidence type="ECO:0000250" key="1"/>
<evidence type="ECO:0000255" key="2">
    <source>
        <dbReference type="PROSITE-ProRule" id="PRU10004"/>
    </source>
</evidence>
<evidence type="ECO:0000305" key="3"/>
<gene>
    <name type="primary">mdh</name>
</gene>
<protein>
    <recommendedName>
        <fullName>Malate dehydrogenase</fullName>
        <ecNumber>1.1.1.37</ecNumber>
    </recommendedName>
</protein>
<accession>P0C1G5</accession>
<accession>P80535</accession>
<reference key="1">
    <citation type="journal article" date="2004" name="Antimicrob. Agents Chemother.">
        <title>Diversity and evolution of the class A chromosomal beta-lactamase gene in Klebsiella pneumoniae.</title>
        <authorList>
            <person name="Haeggman S."/>
            <person name="Loefdahl S."/>
            <person name="Paauw A."/>
            <person name="Verhoef J."/>
            <person name="Brisse S."/>
        </authorList>
    </citation>
    <scope>NUCLEOTIDE SEQUENCE [GENOMIC DNA]</scope>
    <source>
        <strain>ATCC 13884 / JCM 1664 / LMG 3184 / NCTC 5046 / R-70</strain>
    </source>
</reference>
<organism>
    <name type="scientific">Klebsiella pneumoniae subsp. rhinoscleromatis</name>
    <dbReference type="NCBI Taxonomy" id="39831"/>
    <lineage>
        <taxon>Bacteria</taxon>
        <taxon>Pseudomonadati</taxon>
        <taxon>Pseudomonadota</taxon>
        <taxon>Gammaproteobacteria</taxon>
        <taxon>Enterobacterales</taxon>
        <taxon>Enterobacteriaceae</taxon>
        <taxon>Klebsiella/Raoultella group</taxon>
        <taxon>Klebsiella</taxon>
        <taxon>Klebsiella pneumoniae complex</taxon>
    </lineage>
</organism>
<proteinExistence type="inferred from homology"/>